<accession>Q8IV35</accession>
<accession>A0A804HJG6</accession>
<accession>Q8N297</accession>
<protein>
    <recommendedName>
        <fullName evidence="8">Cilia- and flagella-associated protein 337</fullName>
    </recommendedName>
    <alternativeName>
        <fullName>WD repeat-containing protein 49</fullName>
    </alternativeName>
</protein>
<organism>
    <name type="scientific">Homo sapiens</name>
    <name type="common">Human</name>
    <dbReference type="NCBI Taxonomy" id="9606"/>
    <lineage>
        <taxon>Eukaryota</taxon>
        <taxon>Metazoa</taxon>
        <taxon>Chordata</taxon>
        <taxon>Craniata</taxon>
        <taxon>Vertebrata</taxon>
        <taxon>Euteleostomi</taxon>
        <taxon>Mammalia</taxon>
        <taxon>Eutheria</taxon>
        <taxon>Euarchontoglires</taxon>
        <taxon>Primates</taxon>
        <taxon>Haplorrhini</taxon>
        <taxon>Catarrhini</taxon>
        <taxon>Hominidae</taxon>
        <taxon>Homo</taxon>
    </lineage>
</organism>
<evidence type="ECO:0000250" key="1">
    <source>
        <dbReference type="UniProtKB" id="I7MM07"/>
    </source>
</evidence>
<evidence type="ECO:0000255" key="2"/>
<evidence type="ECO:0000255" key="3">
    <source>
        <dbReference type="PROSITE-ProRule" id="PRU00448"/>
    </source>
</evidence>
<evidence type="ECO:0000256" key="4">
    <source>
        <dbReference type="SAM" id="MobiDB-lite"/>
    </source>
</evidence>
<evidence type="ECO:0000269" key="5">
    <source>
    </source>
</evidence>
<evidence type="ECO:0000303" key="6">
    <source>
    </source>
</evidence>
<evidence type="ECO:0000303" key="7">
    <source>
    </source>
</evidence>
<evidence type="ECO:0000305" key="8"/>
<evidence type="ECO:0000312" key="9">
    <source>
        <dbReference type="HGNC" id="HGNC:26587"/>
    </source>
</evidence>
<evidence type="ECO:0000312" key="10">
    <source>
        <dbReference type="Proteomes" id="UP000005640"/>
    </source>
</evidence>
<feature type="chain" id="PRO_0000252428" description="Cilia- and flagella-associated protein 337">
    <location>
        <begin position="1"/>
        <end position="1049"/>
    </location>
</feature>
<feature type="domain" description="EF-hand" evidence="3">
    <location>
        <begin position="81"/>
        <end position="116"/>
    </location>
</feature>
<feature type="repeat" description="WD 1" evidence="2">
    <location>
        <begin position="138"/>
        <end position="177"/>
    </location>
</feature>
<feature type="repeat" description="WD 2" evidence="2">
    <location>
        <begin position="358"/>
        <end position="397"/>
    </location>
</feature>
<feature type="repeat" description="WD 3" evidence="2">
    <location>
        <begin position="401"/>
        <end position="440"/>
    </location>
</feature>
<feature type="repeat" description="WD 4" evidence="2">
    <location>
        <begin position="487"/>
        <end position="528"/>
    </location>
</feature>
<feature type="repeat" description="WD 5" evidence="2">
    <location>
        <begin position="531"/>
        <end position="570"/>
    </location>
</feature>
<feature type="repeat" description="WD 6" evidence="2">
    <location>
        <begin position="633"/>
        <end position="671"/>
    </location>
</feature>
<feature type="repeat" description="WD 7" evidence="2">
    <location>
        <begin position="719"/>
        <end position="766"/>
    </location>
</feature>
<feature type="repeat" description="WD 8" evidence="2">
    <location>
        <begin position="769"/>
        <end position="809"/>
    </location>
</feature>
<feature type="repeat" description="WD 9" evidence="2">
    <location>
        <begin position="825"/>
        <end position="866"/>
    </location>
</feature>
<feature type="region of interest" description="Disordered" evidence="4">
    <location>
        <begin position="691"/>
        <end position="712"/>
    </location>
</feature>
<feature type="compositionally biased region" description="Polar residues" evidence="4">
    <location>
        <begin position="695"/>
        <end position="711"/>
    </location>
</feature>
<feature type="splice variant" id="VSP_062271" description="In isoform 3." evidence="6">
    <location>
        <begin position="1"/>
        <end position="516"/>
    </location>
</feature>
<feature type="splice variant" id="VSP_062272" description="In isoform 2." evidence="7">
    <location>
        <begin position="1"/>
        <end position="341"/>
    </location>
</feature>
<feature type="splice variant" id="VSP_062273" description="In isoform 2 and isoform 3." evidence="6 7">
    <location>
        <begin position="598"/>
        <end position="608"/>
    </location>
</feature>
<feature type="sequence variant" id="VAR_035889" description="In a colorectal cancer sample; somatic mutation; dbSNP:rs74903439." evidence="5">
    <original>R</original>
    <variation>H</variation>
    <location>
        <position position="351"/>
    </location>
</feature>
<feature type="sequence variant" id="VAR_027858" description="In dbSNP:rs13060964.">
    <original>L</original>
    <variation>P</variation>
    <location>
        <position position="1003"/>
    </location>
</feature>
<sequence length="1049" mass="119003">MSCQKAVLELNIGSQLGPKSPERTEGVTAFEDYGTGLLENQLSVGDFVKIQKAFESPQPRKIICMSREDFTQKMTEIVGWGTKEEYGELFDKVDVAQDGFINWDKLTSFILLELYEQDERAKATVVPQWKDLEFLPVKHKDTIQKVIFLKNSSHYLTISKEGLLAIWGEHLKLQETFPITSDATKLKHLWVTSLVSLENVNKIAVAFTSKEVCFYDLLSKEEFACQYKLQGLKGTPICMDYWYDPLDANESILSFGDITGKVQAIAFTAALISLFERPASACEDGEATMTINWAELLSGCHKCCHILEHKLHQGDWVRQVTYNASLDAIISSTTSNTNSVVMAWREKSKKRLNMTSFNIAQGIHAFDYHSRLNLIATAGINNKVCLWNPYVVSKPVGVLWGHSASVIAVQFFVERKQLFSFSKDKVLRLWDIQHQLSIQRIACSFPKSQDFRCLFHFDEAHGRLFISFNNQLALLAMKSEASKRVKSHEKAVTCVLYNSILKQVISSDTGSTVSFWMIDTGQKIKQFTGCHGNAEISTMALDANETRLLTGSTDGTVKIWDFNGYCHHTLNVGQDGAVDISQILILKKKILVTGWERYDYASWKTIGRAITVFRPQNFNQFFIQPEEWKGGIQHHDDILCAAFLPPQTLVTGSYDGEIVLWNNSTENAHHVLHPDYQRLLKSKLDTKPQKLLSAGRSQPSHPMADHSTTGVRNFEIDTEGKNAVMRLCFLKARKNTAVTGGANLVSCGGSGYVRFWDIYKKQLLAEFLAHSGVGSIIMSTDKMNRYLTTGDLDGWLKIWNIEEYCLNSSKNKITKAPTLIRSFQPHEDRISSLEMCEPGGQLLIISSSADCSICVTGVCNAPVWIFGQAKHWHIENCLFLPKRDTNLVESEIQKEISLFSKEESCLDPTEHSLLNKKNKDDSTYNVRPSEDINLDIKYKERSTCMKETQKPYYGEVIKKSFSTFRSLNIGALEELPEVNKPAFLLDPEKYFRKEPEEERPQILEAPSLFKTLKAVFDEKNLFPKEILHHERKAKQLCQEKSCEVKKNKK</sequence>
<dbReference type="EMBL" id="AK090939">
    <property type="protein sequence ID" value="BAC03552.1"/>
    <property type="molecule type" value="mRNA"/>
</dbReference>
<dbReference type="EMBL" id="BC035512">
    <property type="protein sequence ID" value="AAH35512.1"/>
    <property type="molecule type" value="mRNA"/>
</dbReference>
<dbReference type="EMBL" id="AC069530">
    <property type="status" value="NOT_ANNOTATED_CDS"/>
    <property type="molecule type" value="Genomic_DNA"/>
</dbReference>
<dbReference type="EMBL" id="AC117425">
    <property type="status" value="NOT_ANNOTATED_CDS"/>
    <property type="molecule type" value="Genomic_DNA"/>
</dbReference>
<dbReference type="EMBL" id="AC079822">
    <property type="status" value="NOT_ANNOTATED_CDS"/>
    <property type="molecule type" value="Genomic_DNA"/>
</dbReference>
<dbReference type="CCDS" id="CCDS93421.1">
    <molecule id="Q8IV35-3"/>
</dbReference>
<dbReference type="CCDS" id="CCDS93422.1">
    <molecule id="Q8IV35-1"/>
</dbReference>
<dbReference type="RefSeq" id="NP_849146.1">
    <property type="nucleotide sequence ID" value="NM_178824.3"/>
</dbReference>
<dbReference type="SMR" id="Q8IV35"/>
<dbReference type="BioGRID" id="127402">
    <property type="interactions" value="3"/>
</dbReference>
<dbReference type="FunCoup" id="Q8IV35">
    <property type="interactions" value="2"/>
</dbReference>
<dbReference type="IntAct" id="Q8IV35">
    <property type="interactions" value="3"/>
</dbReference>
<dbReference type="STRING" id="9606.ENSP00000311343"/>
<dbReference type="iPTMnet" id="Q8IV35"/>
<dbReference type="PhosphoSitePlus" id="Q8IV35"/>
<dbReference type="BioMuta" id="WDR49"/>
<dbReference type="DMDM" id="74762474"/>
<dbReference type="jPOST" id="Q8IV35"/>
<dbReference type="MassIVE" id="Q8IV35"/>
<dbReference type="PaxDb" id="9606-ENSP00000311343"/>
<dbReference type="PeptideAtlas" id="Q8IV35"/>
<dbReference type="ProteomicsDB" id="70650">
    <molecule id="Q8IV35-1"/>
</dbReference>
<dbReference type="ProteomicsDB" id="70651">
    <molecule id="Q8IV35-2"/>
</dbReference>
<dbReference type="Antibodypedia" id="33690">
    <property type="antibodies" value="133 antibodies from 18 providers"/>
</dbReference>
<dbReference type="DNASU" id="151790"/>
<dbReference type="Ensembl" id="ENST00000308378.7">
    <molecule id="Q8IV35-3"/>
    <property type="protein sequence ID" value="ENSP00000311343.3"/>
    <property type="gene ID" value="ENSG00000174776.12"/>
</dbReference>
<dbReference type="Ensembl" id="ENST00000682715.1">
    <molecule id="Q8IV35-1"/>
    <property type="protein sequence ID" value="ENSP00000507497.1"/>
    <property type="gene ID" value="ENSG00000174776.12"/>
</dbReference>
<dbReference type="MANE-Select" id="ENST00000682715.1">
    <property type="protein sequence ID" value="ENSP00000507497.1"/>
    <property type="RefSeq nucleotide sequence ID" value="NM_001366157.1"/>
    <property type="RefSeq protein sequence ID" value="NP_001353086.1"/>
</dbReference>
<dbReference type="UCSC" id="uc003feu.2">
    <molecule id="Q8IV35-1"/>
    <property type="organism name" value="human"/>
</dbReference>
<dbReference type="AGR" id="HGNC:26587"/>
<dbReference type="GeneCards" id="WDR49"/>
<dbReference type="HGNC" id="HGNC:26587">
    <property type="gene designation" value="WDR49"/>
</dbReference>
<dbReference type="HPA" id="ENSG00000174776">
    <property type="expression patterns" value="Tissue enhanced (choroid plexus, fallopian tube, intestine)"/>
</dbReference>
<dbReference type="MalaCards" id="WDR49"/>
<dbReference type="neXtProt" id="NX_Q8IV35"/>
<dbReference type="OpenTargets" id="ENSG00000174776"/>
<dbReference type="PharmGKB" id="PA134949512"/>
<dbReference type="VEuPathDB" id="HostDB:ENSG00000174776"/>
<dbReference type="eggNOG" id="KOG0266">
    <property type="taxonomic scope" value="Eukaryota"/>
</dbReference>
<dbReference type="GeneTree" id="ENSGT00940000160751"/>
<dbReference type="InParanoid" id="Q8IV35"/>
<dbReference type="OMA" id="GQAKHWQ"/>
<dbReference type="OrthoDB" id="10251381at2759"/>
<dbReference type="PAN-GO" id="Q8IV35">
    <property type="GO annotations" value="0 GO annotations based on evolutionary models"/>
</dbReference>
<dbReference type="PhylomeDB" id="Q8IV35"/>
<dbReference type="TreeFam" id="TF324700"/>
<dbReference type="PathwayCommons" id="Q8IV35"/>
<dbReference type="SignaLink" id="Q8IV35"/>
<dbReference type="BioGRID-ORCS" id="151790">
    <property type="hits" value="7 hits in 1146 CRISPR screens"/>
</dbReference>
<dbReference type="ChiTaRS" id="WDR49">
    <property type="organism name" value="human"/>
</dbReference>
<dbReference type="GenomeRNAi" id="151790"/>
<dbReference type="Pharos" id="Q8IV35">
    <property type="development level" value="Tdark"/>
</dbReference>
<dbReference type="PRO" id="PR:Q8IV35"/>
<dbReference type="Proteomes" id="UP000005640">
    <property type="component" value="Chromosome 3"/>
</dbReference>
<dbReference type="RNAct" id="Q8IV35">
    <property type="molecule type" value="protein"/>
</dbReference>
<dbReference type="Bgee" id="ENSG00000174776">
    <property type="expression patterns" value="Expressed in bronchial epithelial cell and 106 other cell types or tissues"/>
</dbReference>
<dbReference type="ExpressionAtlas" id="Q8IV35">
    <property type="expression patterns" value="baseline and differential"/>
</dbReference>
<dbReference type="GO" id="GO:0005929">
    <property type="term" value="C:cilium"/>
    <property type="evidence" value="ECO:0007669"/>
    <property type="project" value="UniProtKB-SubCell"/>
</dbReference>
<dbReference type="GO" id="GO:0005509">
    <property type="term" value="F:calcium ion binding"/>
    <property type="evidence" value="ECO:0007669"/>
    <property type="project" value="InterPro"/>
</dbReference>
<dbReference type="Gene3D" id="2.130.10.10">
    <property type="entry name" value="YVTN repeat-like/Quinoprotein amine dehydrogenase"/>
    <property type="match status" value="3"/>
</dbReference>
<dbReference type="InterPro" id="IPR011992">
    <property type="entry name" value="EF-hand-dom_pair"/>
</dbReference>
<dbReference type="InterPro" id="IPR002048">
    <property type="entry name" value="EF_hand_dom"/>
</dbReference>
<dbReference type="InterPro" id="IPR020472">
    <property type="entry name" value="G-protein_beta_WD-40_rep"/>
</dbReference>
<dbReference type="InterPro" id="IPR051242">
    <property type="entry name" value="WD-EF-hand_domain"/>
</dbReference>
<dbReference type="InterPro" id="IPR015943">
    <property type="entry name" value="WD40/YVTN_repeat-like_dom_sf"/>
</dbReference>
<dbReference type="InterPro" id="IPR019775">
    <property type="entry name" value="WD40_repeat_CS"/>
</dbReference>
<dbReference type="InterPro" id="IPR036322">
    <property type="entry name" value="WD40_repeat_dom_sf"/>
</dbReference>
<dbReference type="InterPro" id="IPR001680">
    <property type="entry name" value="WD40_rpt"/>
</dbReference>
<dbReference type="PANTHER" id="PTHR44324:SF1">
    <property type="entry name" value="WD REPEAT-CONTAINING PROTEIN 49"/>
    <property type="match status" value="1"/>
</dbReference>
<dbReference type="PANTHER" id="PTHR44324">
    <property type="entry name" value="WD40 REPEAT DOMAIN 95"/>
    <property type="match status" value="1"/>
</dbReference>
<dbReference type="Pfam" id="PF00400">
    <property type="entry name" value="WD40"/>
    <property type="match status" value="5"/>
</dbReference>
<dbReference type="PRINTS" id="PR00320">
    <property type="entry name" value="GPROTEINBRPT"/>
</dbReference>
<dbReference type="SMART" id="SM00320">
    <property type="entry name" value="WD40"/>
    <property type="match status" value="11"/>
</dbReference>
<dbReference type="SUPFAM" id="SSF47473">
    <property type="entry name" value="EF-hand"/>
    <property type="match status" value="1"/>
</dbReference>
<dbReference type="SUPFAM" id="SSF50978">
    <property type="entry name" value="WD40 repeat-like"/>
    <property type="match status" value="2"/>
</dbReference>
<dbReference type="PROSITE" id="PS00678">
    <property type="entry name" value="WD_REPEATS_1"/>
    <property type="match status" value="3"/>
</dbReference>
<dbReference type="PROSITE" id="PS50082">
    <property type="entry name" value="WD_REPEATS_2"/>
    <property type="match status" value="4"/>
</dbReference>
<dbReference type="PROSITE" id="PS50294">
    <property type="entry name" value="WD_REPEATS_REGION"/>
    <property type="match status" value="1"/>
</dbReference>
<comment type="function">
    <text evidence="1">Associates with components of the nexin-dynein regulatory complex (N-DRC), a key regulator of ciliary/flagellar motility, and might act as an inner dynein arm (IDA) hub or linkage.</text>
</comment>
<comment type="subunit">
    <text evidence="1">Associates with components of the nexin-dynein regulatory complex (N-DRC) and the CFAP184:CFAP263 complex.</text>
</comment>
<comment type="interaction">
    <interactant intactId="EBI-20892940">
        <id>Q8IV35</id>
    </interactant>
    <interactant intactId="EBI-1642807">
        <id>Q68EM7</id>
        <label>ARHGAP17</label>
    </interactant>
    <organismsDiffer>false</organismsDiffer>
    <experiments>2</experiments>
</comment>
<comment type="subcellular location">
    <subcellularLocation>
        <location evidence="1">Cell projection</location>
        <location evidence="1">Cilium</location>
    </subcellularLocation>
</comment>
<comment type="alternative products">
    <event type="alternative splicing"/>
    <isoform>
        <id>Q8IV35-1</id>
        <name>1</name>
        <sequence type="displayed"/>
    </isoform>
    <isoform>
        <id>Q8IV35-2</id>
        <name>3</name>
        <sequence type="described" ref="VSP_062271 VSP_062273"/>
    </isoform>
    <isoform>
        <id>Q8IV35-3</id>
        <name>2</name>
        <sequence type="described" ref="VSP_062272 VSP_062273"/>
    </isoform>
</comment>
<comment type="similarity">
    <text>Belongs to the CFAP337 family.</text>
</comment>
<proteinExistence type="evidence at protein level"/>
<keyword id="KW-0025">Alternative splicing</keyword>
<keyword id="KW-0966">Cell projection</keyword>
<keyword id="KW-1267">Proteomics identification</keyword>
<keyword id="KW-1185">Reference proteome</keyword>
<keyword id="KW-0677">Repeat</keyword>
<keyword id="KW-0853">WD repeat</keyword>
<gene>
    <name evidence="8" type="primary">CFAP337</name>
    <name evidence="9" type="synonym">WDR49</name>
</gene>
<reference key="1">
    <citation type="journal article" date="2004" name="Nat. Genet.">
        <title>Complete sequencing and characterization of 21,243 full-length human cDNAs.</title>
        <authorList>
            <person name="Ota T."/>
            <person name="Suzuki Y."/>
            <person name="Nishikawa T."/>
            <person name="Otsuki T."/>
            <person name="Sugiyama T."/>
            <person name="Irie R."/>
            <person name="Wakamatsu A."/>
            <person name="Hayashi K."/>
            <person name="Sato H."/>
            <person name="Nagai K."/>
            <person name="Kimura K."/>
            <person name="Makita H."/>
            <person name="Sekine M."/>
            <person name="Obayashi M."/>
            <person name="Nishi T."/>
            <person name="Shibahara T."/>
            <person name="Tanaka T."/>
            <person name="Ishii S."/>
            <person name="Yamamoto J."/>
            <person name="Saito K."/>
            <person name="Kawai Y."/>
            <person name="Isono Y."/>
            <person name="Nakamura Y."/>
            <person name="Nagahari K."/>
            <person name="Murakami K."/>
            <person name="Yasuda T."/>
            <person name="Iwayanagi T."/>
            <person name="Wagatsuma M."/>
            <person name="Shiratori A."/>
            <person name="Sudo H."/>
            <person name="Hosoiri T."/>
            <person name="Kaku Y."/>
            <person name="Kodaira H."/>
            <person name="Kondo H."/>
            <person name="Sugawara M."/>
            <person name="Takahashi M."/>
            <person name="Kanda K."/>
            <person name="Yokoi T."/>
            <person name="Furuya T."/>
            <person name="Kikkawa E."/>
            <person name="Omura Y."/>
            <person name="Abe K."/>
            <person name="Kamihara K."/>
            <person name="Katsuta N."/>
            <person name="Sato K."/>
            <person name="Tanikawa M."/>
            <person name="Yamazaki M."/>
            <person name="Ninomiya K."/>
            <person name="Ishibashi T."/>
            <person name="Yamashita H."/>
            <person name="Murakawa K."/>
            <person name="Fujimori K."/>
            <person name="Tanai H."/>
            <person name="Kimata M."/>
            <person name="Watanabe M."/>
            <person name="Hiraoka S."/>
            <person name="Chiba Y."/>
            <person name="Ishida S."/>
            <person name="Ono Y."/>
            <person name="Takiguchi S."/>
            <person name="Watanabe S."/>
            <person name="Yosida M."/>
            <person name="Hotuta T."/>
            <person name="Kusano J."/>
            <person name="Kanehori K."/>
            <person name="Takahashi-Fujii A."/>
            <person name="Hara H."/>
            <person name="Tanase T.-O."/>
            <person name="Nomura Y."/>
            <person name="Togiya S."/>
            <person name="Komai F."/>
            <person name="Hara R."/>
            <person name="Takeuchi K."/>
            <person name="Arita M."/>
            <person name="Imose N."/>
            <person name="Musashino K."/>
            <person name="Yuuki H."/>
            <person name="Oshima A."/>
            <person name="Sasaki N."/>
            <person name="Aotsuka S."/>
            <person name="Yoshikawa Y."/>
            <person name="Matsunawa H."/>
            <person name="Ichihara T."/>
            <person name="Shiohata N."/>
            <person name="Sano S."/>
            <person name="Moriya S."/>
            <person name="Momiyama H."/>
            <person name="Satoh N."/>
            <person name="Takami S."/>
            <person name="Terashima Y."/>
            <person name="Suzuki O."/>
            <person name="Nakagawa S."/>
            <person name="Senoh A."/>
            <person name="Mizoguchi H."/>
            <person name="Goto Y."/>
            <person name="Shimizu F."/>
            <person name="Wakebe H."/>
            <person name="Hishigaki H."/>
            <person name="Watanabe T."/>
            <person name="Sugiyama A."/>
            <person name="Takemoto M."/>
            <person name="Kawakami B."/>
            <person name="Yamazaki M."/>
            <person name="Watanabe K."/>
            <person name="Kumagai A."/>
            <person name="Itakura S."/>
            <person name="Fukuzumi Y."/>
            <person name="Fujimori Y."/>
            <person name="Komiyama M."/>
            <person name="Tashiro H."/>
            <person name="Tanigami A."/>
            <person name="Fujiwara T."/>
            <person name="Ono T."/>
            <person name="Yamada K."/>
            <person name="Fujii Y."/>
            <person name="Ozaki K."/>
            <person name="Hirao M."/>
            <person name="Ohmori Y."/>
            <person name="Kawabata A."/>
            <person name="Hikiji T."/>
            <person name="Kobatake N."/>
            <person name="Inagaki H."/>
            <person name="Ikema Y."/>
            <person name="Okamoto S."/>
            <person name="Okitani R."/>
            <person name="Kawakami T."/>
            <person name="Noguchi S."/>
            <person name="Itoh T."/>
            <person name="Shigeta K."/>
            <person name="Senba T."/>
            <person name="Matsumura K."/>
            <person name="Nakajima Y."/>
            <person name="Mizuno T."/>
            <person name="Morinaga M."/>
            <person name="Sasaki M."/>
            <person name="Togashi T."/>
            <person name="Oyama M."/>
            <person name="Hata H."/>
            <person name="Watanabe M."/>
            <person name="Komatsu T."/>
            <person name="Mizushima-Sugano J."/>
            <person name="Satoh T."/>
            <person name="Shirai Y."/>
            <person name="Takahashi Y."/>
            <person name="Nakagawa K."/>
            <person name="Okumura K."/>
            <person name="Nagase T."/>
            <person name="Nomura N."/>
            <person name="Kikuchi H."/>
            <person name="Masuho Y."/>
            <person name="Yamashita R."/>
            <person name="Nakai K."/>
            <person name="Yada T."/>
            <person name="Nakamura Y."/>
            <person name="Ohara O."/>
            <person name="Isogai T."/>
            <person name="Sugano S."/>
        </authorList>
    </citation>
    <scope>NUCLEOTIDE SEQUENCE [LARGE SCALE MRNA] (ISOFORM 3)</scope>
    <source>
        <tissue>Amygdala</tissue>
    </source>
</reference>
<reference key="2">
    <citation type="journal article" date="2004" name="Genome Res.">
        <title>The status, quality, and expansion of the NIH full-length cDNA project: the Mammalian Gene Collection (MGC).</title>
        <authorList>
            <consortium name="The MGC Project Team"/>
        </authorList>
    </citation>
    <scope>NUCLEOTIDE SEQUENCE [LARGE SCALE MRNA] (ISOFORM 2)</scope>
    <source>
        <tissue>Brain</tissue>
    </source>
</reference>
<reference evidence="10" key="3">
    <citation type="journal article" date="2006" name="Nature">
        <title>The DNA sequence, annotation and analysis of human chromosome 3.</title>
        <authorList>
            <person name="Muzny D.M."/>
            <person name="Scherer S.E."/>
            <person name="Kaul R."/>
            <person name="Wang J."/>
            <person name="Yu J."/>
            <person name="Sudbrak R."/>
            <person name="Buhay C.J."/>
            <person name="Chen R."/>
            <person name="Cree A."/>
            <person name="Ding Y."/>
            <person name="Dugan-Rocha S."/>
            <person name="Gill R."/>
            <person name="Gunaratne P."/>
            <person name="Harris R.A."/>
            <person name="Hawes A.C."/>
            <person name="Hernandez J."/>
            <person name="Hodgson A.V."/>
            <person name="Hume J."/>
            <person name="Jackson A."/>
            <person name="Khan Z.M."/>
            <person name="Kovar-Smith C."/>
            <person name="Lewis L.R."/>
            <person name="Lozado R.J."/>
            <person name="Metzker M.L."/>
            <person name="Milosavljevic A."/>
            <person name="Miner G.R."/>
            <person name="Morgan M.B."/>
            <person name="Nazareth L.V."/>
            <person name="Scott G."/>
            <person name="Sodergren E."/>
            <person name="Song X.-Z."/>
            <person name="Steffen D."/>
            <person name="Wei S."/>
            <person name="Wheeler D.A."/>
            <person name="Wright M.W."/>
            <person name="Worley K.C."/>
            <person name="Yuan Y."/>
            <person name="Zhang Z."/>
            <person name="Adams C.Q."/>
            <person name="Ansari-Lari M.A."/>
            <person name="Ayele M."/>
            <person name="Brown M.J."/>
            <person name="Chen G."/>
            <person name="Chen Z."/>
            <person name="Clendenning J."/>
            <person name="Clerc-Blankenburg K.P."/>
            <person name="Chen R."/>
            <person name="Chen Z."/>
            <person name="Davis C."/>
            <person name="Delgado O."/>
            <person name="Dinh H.H."/>
            <person name="Dong W."/>
            <person name="Draper H."/>
            <person name="Ernst S."/>
            <person name="Fu G."/>
            <person name="Gonzalez-Garay M.L."/>
            <person name="Garcia D.K."/>
            <person name="Gillett W."/>
            <person name="Gu J."/>
            <person name="Hao B."/>
            <person name="Haugen E."/>
            <person name="Havlak P."/>
            <person name="He X."/>
            <person name="Hennig S."/>
            <person name="Hu S."/>
            <person name="Huang W."/>
            <person name="Jackson L.R."/>
            <person name="Jacob L.S."/>
            <person name="Kelly S.H."/>
            <person name="Kube M."/>
            <person name="Levy R."/>
            <person name="Li Z."/>
            <person name="Liu B."/>
            <person name="Liu J."/>
            <person name="Liu W."/>
            <person name="Lu J."/>
            <person name="Maheshwari M."/>
            <person name="Nguyen B.-V."/>
            <person name="Okwuonu G.O."/>
            <person name="Palmeiri A."/>
            <person name="Pasternak S."/>
            <person name="Perez L.M."/>
            <person name="Phelps K.A."/>
            <person name="Plopper F.J."/>
            <person name="Qiang B."/>
            <person name="Raymond C."/>
            <person name="Rodriguez R."/>
            <person name="Saenphimmachak C."/>
            <person name="Santibanez J."/>
            <person name="Shen H."/>
            <person name="Shen Y."/>
            <person name="Subramanian S."/>
            <person name="Tabor P.E."/>
            <person name="Verduzco D."/>
            <person name="Waldron L."/>
            <person name="Wang J."/>
            <person name="Wang J."/>
            <person name="Wang Q."/>
            <person name="Williams G.A."/>
            <person name="Wong G.K.-S."/>
            <person name="Yao Z."/>
            <person name="Zhang J."/>
            <person name="Zhang X."/>
            <person name="Zhao G."/>
            <person name="Zhou J."/>
            <person name="Zhou Y."/>
            <person name="Nelson D."/>
            <person name="Lehrach H."/>
            <person name="Reinhardt R."/>
            <person name="Naylor S.L."/>
            <person name="Yang H."/>
            <person name="Olson M."/>
            <person name="Weinstock G."/>
            <person name="Gibbs R.A."/>
        </authorList>
    </citation>
    <scope>NUCLEOTIDE SEQUENCE [LARGE SCALE GENOMIC DNA]</scope>
</reference>
<reference key="4">
    <citation type="journal article" date="2006" name="Science">
        <title>The consensus coding sequences of human breast and colorectal cancers.</title>
        <authorList>
            <person name="Sjoeblom T."/>
            <person name="Jones S."/>
            <person name="Wood L.D."/>
            <person name="Parsons D.W."/>
            <person name="Lin J."/>
            <person name="Barber T.D."/>
            <person name="Mandelker D."/>
            <person name="Leary R.J."/>
            <person name="Ptak J."/>
            <person name="Silliman N."/>
            <person name="Szabo S."/>
            <person name="Buckhaults P."/>
            <person name="Farrell C."/>
            <person name="Meeh P."/>
            <person name="Markowitz S.D."/>
            <person name="Willis J."/>
            <person name="Dawson D."/>
            <person name="Willson J.K.V."/>
            <person name="Gazdar A.F."/>
            <person name="Hartigan J."/>
            <person name="Wu L."/>
            <person name="Liu C."/>
            <person name="Parmigiani G."/>
            <person name="Park B.H."/>
            <person name="Bachman K.E."/>
            <person name="Papadopoulos N."/>
            <person name="Vogelstein B."/>
            <person name="Kinzler K.W."/>
            <person name="Velculescu V.E."/>
        </authorList>
    </citation>
    <scope>VARIANT [LARGE SCALE ANALYSIS] HIS-351</scope>
</reference>
<name>CF337_HUMAN</name>